<gene>
    <name evidence="1" type="primary">lspA</name>
    <name type="ordered locus">RP408</name>
</gene>
<accession>Q9ZDC4</accession>
<evidence type="ECO:0000255" key="1">
    <source>
        <dbReference type="HAMAP-Rule" id="MF_00161"/>
    </source>
</evidence>
<evidence type="ECO:0000305" key="2"/>
<proteinExistence type="inferred from homology"/>
<reference key="1">
    <citation type="journal article" date="1998" name="Nature">
        <title>The genome sequence of Rickettsia prowazekii and the origin of mitochondria.</title>
        <authorList>
            <person name="Andersson S.G.E."/>
            <person name="Zomorodipour A."/>
            <person name="Andersson J.O."/>
            <person name="Sicheritz-Ponten T."/>
            <person name="Alsmark U.C.M."/>
            <person name="Podowski R.M."/>
            <person name="Naeslund A.K."/>
            <person name="Eriksson A.-S."/>
            <person name="Winkler H.H."/>
            <person name="Kurland C.G."/>
        </authorList>
    </citation>
    <scope>NUCLEOTIDE SEQUENCE [LARGE SCALE GENOMIC DNA]</scope>
    <source>
        <strain>Madrid E</strain>
    </source>
</reference>
<protein>
    <recommendedName>
        <fullName evidence="1">Lipoprotein signal peptidase</fullName>
        <ecNumber evidence="1">3.4.23.36</ecNumber>
    </recommendedName>
    <alternativeName>
        <fullName evidence="1">Prolipoprotein signal peptidase</fullName>
    </alternativeName>
    <alternativeName>
        <fullName evidence="1">Signal peptidase II</fullName>
        <shortName evidence="1">SPase II</shortName>
    </alternativeName>
</protein>
<feature type="chain" id="PRO_0000178808" description="Lipoprotein signal peptidase">
    <location>
        <begin position="1"/>
        <end position="194"/>
    </location>
</feature>
<feature type="transmembrane region" description="Helical" evidence="1">
    <location>
        <begin position="75"/>
        <end position="95"/>
    </location>
</feature>
<feature type="transmembrane region" description="Helical" evidence="1">
    <location>
        <begin position="97"/>
        <end position="117"/>
    </location>
</feature>
<feature type="transmembrane region" description="Helical" evidence="1">
    <location>
        <begin position="135"/>
        <end position="155"/>
    </location>
</feature>
<feature type="active site" evidence="1">
    <location>
        <position position="126"/>
    </location>
</feature>
<feature type="active site" evidence="1">
    <location>
        <position position="144"/>
    </location>
</feature>
<organism>
    <name type="scientific">Rickettsia prowazekii (strain Madrid E)</name>
    <dbReference type="NCBI Taxonomy" id="272947"/>
    <lineage>
        <taxon>Bacteria</taxon>
        <taxon>Pseudomonadati</taxon>
        <taxon>Pseudomonadota</taxon>
        <taxon>Alphaproteobacteria</taxon>
        <taxon>Rickettsiales</taxon>
        <taxon>Rickettsiaceae</taxon>
        <taxon>Rickettsieae</taxon>
        <taxon>Rickettsia</taxon>
        <taxon>typhus group</taxon>
    </lineage>
</organism>
<keyword id="KW-0064">Aspartyl protease</keyword>
<keyword id="KW-0997">Cell inner membrane</keyword>
<keyword id="KW-1003">Cell membrane</keyword>
<keyword id="KW-0378">Hydrolase</keyword>
<keyword id="KW-0472">Membrane</keyword>
<keyword id="KW-0645">Protease</keyword>
<keyword id="KW-1185">Reference proteome</keyword>
<keyword id="KW-0812">Transmembrane</keyword>
<keyword id="KW-1133">Transmembrane helix</keyword>
<name>LSPA_RICPR</name>
<comment type="function">
    <text evidence="1">This protein specifically catalyzes the removal of signal peptides from prolipoproteins.</text>
</comment>
<comment type="catalytic activity">
    <reaction evidence="1">
        <text>Release of signal peptides from bacterial membrane prolipoproteins. Hydrolyzes -Xaa-Yaa-Zaa-|-(S,diacylglyceryl)Cys-, in which Xaa is hydrophobic (preferably Leu), and Yaa (Ala or Ser) and Zaa (Gly or Ala) have small, neutral side chains.</text>
        <dbReference type="EC" id="3.4.23.36"/>
    </reaction>
</comment>
<comment type="pathway">
    <text evidence="1">Protein modification; lipoprotein biosynthesis (signal peptide cleavage).</text>
</comment>
<comment type="subcellular location">
    <subcellularLocation>
        <location evidence="1">Cell inner membrane</location>
        <topology evidence="1">Multi-pass membrane protein</topology>
    </subcellularLocation>
</comment>
<comment type="similarity">
    <text evidence="1 2">Belongs to the peptidase A8 family.</text>
</comment>
<sequence length="194" mass="22826">MISLLKKLYFTFSRSSRIIITLVIIDQLTKWWFINNLRWKPGLMLKVTSVLNMVYTWNYGISFGLMREYYQYSNTIFLITNMIIVCYLYYLMICSKTIGSFAGYSFVIGGAIGNLIDRFCRGAVFDFIHFHYRNYSFPVFNLADCFITLGVIILMEDYFSTKKVIEETSKGNYDNLQIEVMAEKIRHTDHDSKI</sequence>
<dbReference type="EC" id="3.4.23.36" evidence="1"/>
<dbReference type="EMBL" id="AJ235271">
    <property type="protein sequence ID" value="CAA14865.1"/>
    <property type="molecule type" value="Genomic_DNA"/>
</dbReference>
<dbReference type="PIR" id="G71698">
    <property type="entry name" value="G71698"/>
</dbReference>
<dbReference type="RefSeq" id="NP_220789.1">
    <property type="nucleotide sequence ID" value="NC_000963.1"/>
</dbReference>
<dbReference type="RefSeq" id="WP_004597594.1">
    <property type="nucleotide sequence ID" value="NC_000963.1"/>
</dbReference>
<dbReference type="SMR" id="Q9ZDC4"/>
<dbReference type="STRING" id="272947.gene:17555488"/>
<dbReference type="EnsemblBacteria" id="CAA14865">
    <property type="protein sequence ID" value="CAA14865"/>
    <property type="gene ID" value="CAA14865"/>
</dbReference>
<dbReference type="GeneID" id="57569533"/>
<dbReference type="KEGG" id="rpr:RP408"/>
<dbReference type="PATRIC" id="fig|272947.5.peg.421"/>
<dbReference type="eggNOG" id="COG0597">
    <property type="taxonomic scope" value="Bacteria"/>
</dbReference>
<dbReference type="HOGENOM" id="CLU_083252_4_3_5"/>
<dbReference type="OrthoDB" id="9810259at2"/>
<dbReference type="UniPathway" id="UPA00665"/>
<dbReference type="Proteomes" id="UP000002480">
    <property type="component" value="Chromosome"/>
</dbReference>
<dbReference type="GO" id="GO:0005886">
    <property type="term" value="C:plasma membrane"/>
    <property type="evidence" value="ECO:0007669"/>
    <property type="project" value="UniProtKB-SubCell"/>
</dbReference>
<dbReference type="GO" id="GO:0004190">
    <property type="term" value="F:aspartic-type endopeptidase activity"/>
    <property type="evidence" value="ECO:0007669"/>
    <property type="project" value="UniProtKB-UniRule"/>
</dbReference>
<dbReference type="GO" id="GO:0006508">
    <property type="term" value="P:proteolysis"/>
    <property type="evidence" value="ECO:0007669"/>
    <property type="project" value="UniProtKB-KW"/>
</dbReference>
<dbReference type="HAMAP" id="MF_00161">
    <property type="entry name" value="LspA"/>
    <property type="match status" value="1"/>
</dbReference>
<dbReference type="InterPro" id="IPR001872">
    <property type="entry name" value="Peptidase_A8"/>
</dbReference>
<dbReference type="NCBIfam" id="TIGR00077">
    <property type="entry name" value="lspA"/>
    <property type="match status" value="1"/>
</dbReference>
<dbReference type="PANTHER" id="PTHR33695">
    <property type="entry name" value="LIPOPROTEIN SIGNAL PEPTIDASE"/>
    <property type="match status" value="1"/>
</dbReference>
<dbReference type="PANTHER" id="PTHR33695:SF1">
    <property type="entry name" value="LIPOPROTEIN SIGNAL PEPTIDASE"/>
    <property type="match status" value="1"/>
</dbReference>
<dbReference type="Pfam" id="PF01252">
    <property type="entry name" value="Peptidase_A8"/>
    <property type="match status" value="1"/>
</dbReference>
<dbReference type="PRINTS" id="PR00781">
    <property type="entry name" value="LIPOSIGPTASE"/>
</dbReference>
<dbReference type="PROSITE" id="PS00855">
    <property type="entry name" value="SPASE_II"/>
    <property type="match status" value="1"/>
</dbReference>